<protein>
    <recommendedName>
        <fullName evidence="1">4-hydroxy-tetrahydrodipicolinate synthase</fullName>
        <shortName evidence="1">HTPA synthase</shortName>
        <ecNumber evidence="1">4.3.3.7</ecNumber>
    </recommendedName>
</protein>
<evidence type="ECO:0000255" key="1">
    <source>
        <dbReference type="HAMAP-Rule" id="MF_00418"/>
    </source>
</evidence>
<evidence type="ECO:0000305" key="2"/>
<accession>C1DD55</accession>
<gene>
    <name evidence="1" type="primary">dapA</name>
    <name type="ordered locus">LHK_00697</name>
</gene>
<keyword id="KW-0028">Amino-acid biosynthesis</keyword>
<keyword id="KW-0963">Cytoplasm</keyword>
<keyword id="KW-0220">Diaminopimelate biosynthesis</keyword>
<keyword id="KW-0456">Lyase</keyword>
<keyword id="KW-0457">Lysine biosynthesis</keyword>
<keyword id="KW-1185">Reference proteome</keyword>
<keyword id="KW-0704">Schiff base</keyword>
<name>DAPA_LARHH</name>
<dbReference type="EC" id="4.3.3.7" evidence="1"/>
<dbReference type="EMBL" id="CP001154">
    <property type="protein sequence ID" value="ACO73690.1"/>
    <property type="molecule type" value="Genomic_DNA"/>
</dbReference>
<dbReference type="RefSeq" id="WP_012696182.1">
    <property type="nucleotide sequence ID" value="NC_012559.1"/>
</dbReference>
<dbReference type="SMR" id="C1DD55"/>
<dbReference type="STRING" id="557598.LHK_00697"/>
<dbReference type="GeneID" id="75109022"/>
<dbReference type="KEGG" id="lhk:LHK_00697"/>
<dbReference type="eggNOG" id="COG0329">
    <property type="taxonomic scope" value="Bacteria"/>
</dbReference>
<dbReference type="HOGENOM" id="CLU_049343_7_1_4"/>
<dbReference type="UniPathway" id="UPA00034">
    <property type="reaction ID" value="UER00017"/>
</dbReference>
<dbReference type="Proteomes" id="UP000002010">
    <property type="component" value="Chromosome"/>
</dbReference>
<dbReference type="GO" id="GO:0005829">
    <property type="term" value="C:cytosol"/>
    <property type="evidence" value="ECO:0007669"/>
    <property type="project" value="TreeGrafter"/>
</dbReference>
<dbReference type="GO" id="GO:0008840">
    <property type="term" value="F:4-hydroxy-tetrahydrodipicolinate synthase activity"/>
    <property type="evidence" value="ECO:0007669"/>
    <property type="project" value="UniProtKB-UniRule"/>
</dbReference>
<dbReference type="GO" id="GO:0019877">
    <property type="term" value="P:diaminopimelate biosynthetic process"/>
    <property type="evidence" value="ECO:0007669"/>
    <property type="project" value="UniProtKB-UniRule"/>
</dbReference>
<dbReference type="GO" id="GO:0009089">
    <property type="term" value="P:lysine biosynthetic process via diaminopimelate"/>
    <property type="evidence" value="ECO:0007669"/>
    <property type="project" value="UniProtKB-UniRule"/>
</dbReference>
<dbReference type="CDD" id="cd00950">
    <property type="entry name" value="DHDPS"/>
    <property type="match status" value="1"/>
</dbReference>
<dbReference type="Gene3D" id="3.20.20.70">
    <property type="entry name" value="Aldolase class I"/>
    <property type="match status" value="1"/>
</dbReference>
<dbReference type="HAMAP" id="MF_00418">
    <property type="entry name" value="DapA"/>
    <property type="match status" value="1"/>
</dbReference>
<dbReference type="InterPro" id="IPR013785">
    <property type="entry name" value="Aldolase_TIM"/>
</dbReference>
<dbReference type="InterPro" id="IPR005263">
    <property type="entry name" value="DapA"/>
</dbReference>
<dbReference type="InterPro" id="IPR002220">
    <property type="entry name" value="DapA-like"/>
</dbReference>
<dbReference type="InterPro" id="IPR020625">
    <property type="entry name" value="Schiff_base-form_aldolases_AS"/>
</dbReference>
<dbReference type="InterPro" id="IPR020624">
    <property type="entry name" value="Schiff_base-form_aldolases_CS"/>
</dbReference>
<dbReference type="NCBIfam" id="TIGR00674">
    <property type="entry name" value="dapA"/>
    <property type="match status" value="1"/>
</dbReference>
<dbReference type="PANTHER" id="PTHR12128:SF66">
    <property type="entry name" value="4-HYDROXY-2-OXOGLUTARATE ALDOLASE, MITOCHONDRIAL"/>
    <property type="match status" value="1"/>
</dbReference>
<dbReference type="PANTHER" id="PTHR12128">
    <property type="entry name" value="DIHYDRODIPICOLINATE SYNTHASE"/>
    <property type="match status" value="1"/>
</dbReference>
<dbReference type="Pfam" id="PF00701">
    <property type="entry name" value="DHDPS"/>
    <property type="match status" value="1"/>
</dbReference>
<dbReference type="PIRSF" id="PIRSF001365">
    <property type="entry name" value="DHDPS"/>
    <property type="match status" value="1"/>
</dbReference>
<dbReference type="PRINTS" id="PR00146">
    <property type="entry name" value="DHPICSNTHASE"/>
</dbReference>
<dbReference type="SMART" id="SM01130">
    <property type="entry name" value="DHDPS"/>
    <property type="match status" value="1"/>
</dbReference>
<dbReference type="SUPFAM" id="SSF51569">
    <property type="entry name" value="Aldolase"/>
    <property type="match status" value="1"/>
</dbReference>
<dbReference type="PROSITE" id="PS00665">
    <property type="entry name" value="DHDPS_1"/>
    <property type="match status" value="1"/>
</dbReference>
<dbReference type="PROSITE" id="PS00666">
    <property type="entry name" value="DHDPS_2"/>
    <property type="match status" value="1"/>
</dbReference>
<sequence length="291" mass="30980">MLTGSLVAIVTPMLEDGSVDFEALDRLVDFHIESGTSGIVAVGTTGESAALAVEEHLQVVAAVVKRAAGRIKVIAGAGANSTHEAIDLTRESRRLGADQVLSVVPYYNKPTQEGMYRHFRAIAESTDIPVILYNVPGRTVADMCNDTVLRLAEIPNIIGLKDATADLARCCDLVKRAPKDFALYTGDDATAMAFMLCGGHGVISVTANVAPRQMAELCRAAIAGDVQAARRINDPLQGLHKDLFCEANPIPVKWALERMGRIPAGIRLPLTRLSDAGQSKVEAALKAANLI</sequence>
<organism>
    <name type="scientific">Laribacter hongkongensis (strain HLHK9)</name>
    <dbReference type="NCBI Taxonomy" id="557598"/>
    <lineage>
        <taxon>Bacteria</taxon>
        <taxon>Pseudomonadati</taxon>
        <taxon>Pseudomonadota</taxon>
        <taxon>Betaproteobacteria</taxon>
        <taxon>Neisseriales</taxon>
        <taxon>Aquaspirillaceae</taxon>
        <taxon>Laribacter</taxon>
    </lineage>
</organism>
<feature type="chain" id="PRO_1000134869" description="4-hydroxy-tetrahydrodipicolinate synthase">
    <location>
        <begin position="1"/>
        <end position="291"/>
    </location>
</feature>
<feature type="active site" description="Proton donor/acceptor" evidence="1">
    <location>
        <position position="133"/>
    </location>
</feature>
<feature type="active site" description="Schiff-base intermediate with substrate" evidence="1">
    <location>
        <position position="161"/>
    </location>
</feature>
<feature type="binding site" evidence="1">
    <location>
        <position position="45"/>
    </location>
    <ligand>
        <name>pyruvate</name>
        <dbReference type="ChEBI" id="CHEBI:15361"/>
    </ligand>
</feature>
<feature type="binding site" evidence="1">
    <location>
        <position position="203"/>
    </location>
    <ligand>
        <name>pyruvate</name>
        <dbReference type="ChEBI" id="CHEBI:15361"/>
    </ligand>
</feature>
<feature type="site" description="Part of a proton relay during catalysis" evidence="1">
    <location>
        <position position="44"/>
    </location>
</feature>
<feature type="site" description="Part of a proton relay during catalysis" evidence="1">
    <location>
        <position position="107"/>
    </location>
</feature>
<proteinExistence type="inferred from homology"/>
<comment type="function">
    <text evidence="1">Catalyzes the condensation of (S)-aspartate-beta-semialdehyde [(S)-ASA] and pyruvate to 4-hydroxy-tetrahydrodipicolinate (HTPA).</text>
</comment>
<comment type="catalytic activity">
    <reaction evidence="1">
        <text>L-aspartate 4-semialdehyde + pyruvate = (2S,4S)-4-hydroxy-2,3,4,5-tetrahydrodipicolinate + H2O + H(+)</text>
        <dbReference type="Rhea" id="RHEA:34171"/>
        <dbReference type="ChEBI" id="CHEBI:15361"/>
        <dbReference type="ChEBI" id="CHEBI:15377"/>
        <dbReference type="ChEBI" id="CHEBI:15378"/>
        <dbReference type="ChEBI" id="CHEBI:67139"/>
        <dbReference type="ChEBI" id="CHEBI:537519"/>
        <dbReference type="EC" id="4.3.3.7"/>
    </reaction>
</comment>
<comment type="pathway">
    <text evidence="1">Amino-acid biosynthesis; L-lysine biosynthesis via DAP pathway; (S)-tetrahydrodipicolinate from L-aspartate: step 3/4.</text>
</comment>
<comment type="subunit">
    <text evidence="1">Homotetramer; dimer of dimers.</text>
</comment>
<comment type="subcellular location">
    <subcellularLocation>
        <location evidence="1">Cytoplasm</location>
    </subcellularLocation>
</comment>
<comment type="similarity">
    <text evidence="1">Belongs to the DapA family.</text>
</comment>
<comment type="caution">
    <text evidence="2">Was originally thought to be a dihydrodipicolinate synthase (DHDPS), catalyzing the condensation of (S)-aspartate-beta-semialdehyde [(S)-ASA] and pyruvate to dihydrodipicolinate (DHDP). However, it was shown in E.coli that the product of the enzymatic reaction is not dihydrodipicolinate but in fact (4S)-4-hydroxy-2,3,4,5-tetrahydro-(2S)-dipicolinic acid (HTPA), and that the consecutive dehydration reaction leading to DHDP is not spontaneous but catalyzed by DapB.</text>
</comment>
<reference key="1">
    <citation type="journal article" date="2009" name="PLoS Genet.">
        <title>The complete genome and proteome of Laribacter hongkongensis reveal potential mechanisms for adaptations to different temperatures and habitats.</title>
        <authorList>
            <person name="Woo P.C.Y."/>
            <person name="Lau S.K.P."/>
            <person name="Tse H."/>
            <person name="Teng J.L.L."/>
            <person name="Curreem S.O."/>
            <person name="Tsang A.K.L."/>
            <person name="Fan R.Y.Y."/>
            <person name="Wong G.K.M."/>
            <person name="Huang Y."/>
            <person name="Loman N.J."/>
            <person name="Snyder L.A.S."/>
            <person name="Cai J.J."/>
            <person name="Huang J.-D."/>
            <person name="Mak W."/>
            <person name="Pallen M.J."/>
            <person name="Lok S."/>
            <person name="Yuen K.-Y."/>
        </authorList>
    </citation>
    <scope>NUCLEOTIDE SEQUENCE [LARGE SCALE GENOMIC DNA]</scope>
    <source>
        <strain>HLHK9</strain>
    </source>
</reference>